<name>BIOB_CHLTE</name>
<accession>Q8KGB6</accession>
<feature type="chain" id="PRO_0000381304" description="Biotin synthase">
    <location>
        <begin position="1"/>
        <end position="333"/>
    </location>
</feature>
<feature type="domain" description="Radical SAM core" evidence="2">
    <location>
        <begin position="54"/>
        <end position="287"/>
    </location>
</feature>
<feature type="binding site" evidence="1">
    <location>
        <position position="72"/>
    </location>
    <ligand>
        <name>[4Fe-4S] cluster</name>
        <dbReference type="ChEBI" id="CHEBI:49883"/>
        <note>4Fe-4S-S-AdoMet</note>
    </ligand>
</feature>
<feature type="binding site" evidence="1">
    <location>
        <position position="76"/>
    </location>
    <ligand>
        <name>[4Fe-4S] cluster</name>
        <dbReference type="ChEBI" id="CHEBI:49883"/>
        <note>4Fe-4S-S-AdoMet</note>
    </ligand>
</feature>
<feature type="binding site" evidence="1">
    <location>
        <position position="79"/>
    </location>
    <ligand>
        <name>[4Fe-4S] cluster</name>
        <dbReference type="ChEBI" id="CHEBI:49883"/>
        <note>4Fe-4S-S-AdoMet</note>
    </ligand>
</feature>
<feature type="binding site" evidence="1">
    <location>
        <position position="151"/>
    </location>
    <ligand>
        <name>[2Fe-2S] cluster</name>
        <dbReference type="ChEBI" id="CHEBI:190135"/>
    </ligand>
</feature>
<feature type="binding site" evidence="1">
    <location>
        <position position="212"/>
    </location>
    <ligand>
        <name>[2Fe-2S] cluster</name>
        <dbReference type="ChEBI" id="CHEBI:190135"/>
    </ligand>
</feature>
<feature type="binding site" evidence="1">
    <location>
        <position position="282"/>
    </location>
    <ligand>
        <name>[2Fe-2S] cluster</name>
        <dbReference type="ChEBI" id="CHEBI:190135"/>
    </ligand>
</feature>
<reference key="1">
    <citation type="journal article" date="2002" name="Proc. Natl. Acad. Sci. U.S.A.">
        <title>The complete genome sequence of Chlorobium tepidum TLS, a photosynthetic, anaerobic, green-sulfur bacterium.</title>
        <authorList>
            <person name="Eisen J.A."/>
            <person name="Nelson K.E."/>
            <person name="Paulsen I.T."/>
            <person name="Heidelberg J.F."/>
            <person name="Wu M."/>
            <person name="Dodson R.J."/>
            <person name="DeBoy R.T."/>
            <person name="Gwinn M.L."/>
            <person name="Nelson W.C."/>
            <person name="Haft D.H."/>
            <person name="Hickey E.K."/>
            <person name="Peterson J.D."/>
            <person name="Durkin A.S."/>
            <person name="Kolonay J.F."/>
            <person name="Yang F."/>
            <person name="Holt I.E."/>
            <person name="Umayam L.A."/>
            <person name="Mason T.M."/>
            <person name="Brenner M."/>
            <person name="Shea T.P."/>
            <person name="Parksey D.S."/>
            <person name="Nierman W.C."/>
            <person name="Feldblyum T.V."/>
            <person name="Hansen C.L."/>
            <person name="Craven M.B."/>
            <person name="Radune D."/>
            <person name="Vamathevan J.J."/>
            <person name="Khouri H.M."/>
            <person name="White O."/>
            <person name="Gruber T.M."/>
            <person name="Ketchum K.A."/>
            <person name="Venter J.C."/>
            <person name="Tettelin H."/>
            <person name="Bryant D.A."/>
            <person name="Fraser C.M."/>
        </authorList>
    </citation>
    <scope>NUCLEOTIDE SEQUENCE [LARGE SCALE GENOMIC DNA]</scope>
    <source>
        <strain>ATCC 49652 / DSM 12025 / NBRC 103806 / TLS</strain>
    </source>
</reference>
<proteinExistence type="inferred from homology"/>
<keyword id="KW-0001">2Fe-2S</keyword>
<keyword id="KW-0004">4Fe-4S</keyword>
<keyword id="KW-0093">Biotin biosynthesis</keyword>
<keyword id="KW-0408">Iron</keyword>
<keyword id="KW-0411">Iron-sulfur</keyword>
<keyword id="KW-0479">Metal-binding</keyword>
<keyword id="KW-1185">Reference proteome</keyword>
<keyword id="KW-0949">S-adenosyl-L-methionine</keyword>
<keyword id="KW-0808">Transferase</keyword>
<evidence type="ECO:0000255" key="1">
    <source>
        <dbReference type="HAMAP-Rule" id="MF_01694"/>
    </source>
</evidence>
<evidence type="ECO:0000255" key="2">
    <source>
        <dbReference type="PROSITE-ProRule" id="PRU01266"/>
    </source>
</evidence>
<protein>
    <recommendedName>
        <fullName evidence="1">Biotin synthase</fullName>
        <ecNumber evidence="1">2.8.1.6</ecNumber>
    </recommendedName>
</protein>
<sequence length="333" mass="35937">MKSRLHPDIEKAYAVLDTGEPLSLELASALGRLPDSEVLDLVSLANRVKARHAANHGAIHACSIMNAKSGVCGENCRFCAQSKHNSAEVDVYELVDENKVLEQARSAWEQGIGHFGIVTSGYGYLKVTPEFERILGMIDRLHRELPGLHVCASLGVLGDAPAAELARHGIAHYNINIQVDPARYGELIADTHAVNERIGTIRRLRSNGIGVCCGGILGVGETMQERIGMIFALRDLDVTVIPLNVLVPIDGTPLEGAAPVSVPEIAKTFAICRLAHPTKIIKFAAGRETVMKDFQGLLMLAGADGFLTGGYLTTRGRDISTDRQLARQLSKFS</sequence>
<organism>
    <name type="scientific">Chlorobaculum tepidum (strain ATCC 49652 / DSM 12025 / NBRC 103806 / TLS)</name>
    <name type="common">Chlorobium tepidum</name>
    <dbReference type="NCBI Taxonomy" id="194439"/>
    <lineage>
        <taxon>Bacteria</taxon>
        <taxon>Pseudomonadati</taxon>
        <taxon>Chlorobiota</taxon>
        <taxon>Chlorobiia</taxon>
        <taxon>Chlorobiales</taxon>
        <taxon>Chlorobiaceae</taxon>
        <taxon>Chlorobaculum</taxon>
    </lineage>
</organism>
<gene>
    <name evidence="1" type="primary">bioB</name>
    <name type="ordered locus">CT0052</name>
</gene>
<dbReference type="EC" id="2.8.1.6" evidence="1"/>
<dbReference type="EMBL" id="AE006470">
    <property type="protein sequence ID" value="AAM71300.1"/>
    <property type="molecule type" value="Genomic_DNA"/>
</dbReference>
<dbReference type="RefSeq" id="NP_660958.1">
    <property type="nucleotide sequence ID" value="NC_002932.3"/>
</dbReference>
<dbReference type="RefSeq" id="WP_010931746.1">
    <property type="nucleotide sequence ID" value="NC_002932.3"/>
</dbReference>
<dbReference type="SMR" id="Q8KGB6"/>
<dbReference type="STRING" id="194439.CT0052"/>
<dbReference type="EnsemblBacteria" id="AAM71300">
    <property type="protein sequence ID" value="AAM71300"/>
    <property type="gene ID" value="CT0052"/>
</dbReference>
<dbReference type="KEGG" id="cte:CT0052"/>
<dbReference type="PATRIC" id="fig|194439.7.peg.51"/>
<dbReference type="eggNOG" id="COG0502">
    <property type="taxonomic scope" value="Bacteria"/>
</dbReference>
<dbReference type="HOGENOM" id="CLU_033172_2_1_10"/>
<dbReference type="OrthoDB" id="9786826at2"/>
<dbReference type="UniPathway" id="UPA00078">
    <property type="reaction ID" value="UER00162"/>
</dbReference>
<dbReference type="Proteomes" id="UP000001007">
    <property type="component" value="Chromosome"/>
</dbReference>
<dbReference type="GO" id="GO:0051537">
    <property type="term" value="F:2 iron, 2 sulfur cluster binding"/>
    <property type="evidence" value="ECO:0007669"/>
    <property type="project" value="UniProtKB-KW"/>
</dbReference>
<dbReference type="GO" id="GO:0051539">
    <property type="term" value="F:4 iron, 4 sulfur cluster binding"/>
    <property type="evidence" value="ECO:0007669"/>
    <property type="project" value="UniProtKB-KW"/>
</dbReference>
<dbReference type="GO" id="GO:0004076">
    <property type="term" value="F:biotin synthase activity"/>
    <property type="evidence" value="ECO:0007669"/>
    <property type="project" value="UniProtKB-UniRule"/>
</dbReference>
<dbReference type="GO" id="GO:0005506">
    <property type="term" value="F:iron ion binding"/>
    <property type="evidence" value="ECO:0007669"/>
    <property type="project" value="UniProtKB-UniRule"/>
</dbReference>
<dbReference type="GO" id="GO:0009102">
    <property type="term" value="P:biotin biosynthetic process"/>
    <property type="evidence" value="ECO:0007669"/>
    <property type="project" value="UniProtKB-UniRule"/>
</dbReference>
<dbReference type="CDD" id="cd01335">
    <property type="entry name" value="Radical_SAM"/>
    <property type="match status" value="1"/>
</dbReference>
<dbReference type="Gene3D" id="3.20.20.70">
    <property type="entry name" value="Aldolase class I"/>
    <property type="match status" value="1"/>
</dbReference>
<dbReference type="HAMAP" id="MF_01694">
    <property type="entry name" value="BioB"/>
    <property type="match status" value="1"/>
</dbReference>
<dbReference type="InterPro" id="IPR013785">
    <property type="entry name" value="Aldolase_TIM"/>
</dbReference>
<dbReference type="InterPro" id="IPR010722">
    <property type="entry name" value="BATS_dom"/>
</dbReference>
<dbReference type="InterPro" id="IPR002684">
    <property type="entry name" value="Biotin_synth/BioAB"/>
</dbReference>
<dbReference type="InterPro" id="IPR024177">
    <property type="entry name" value="Biotin_synthase"/>
</dbReference>
<dbReference type="InterPro" id="IPR006638">
    <property type="entry name" value="Elp3/MiaA/NifB-like_rSAM"/>
</dbReference>
<dbReference type="InterPro" id="IPR007197">
    <property type="entry name" value="rSAM"/>
</dbReference>
<dbReference type="NCBIfam" id="TIGR00433">
    <property type="entry name" value="bioB"/>
    <property type="match status" value="1"/>
</dbReference>
<dbReference type="PANTHER" id="PTHR22976">
    <property type="entry name" value="BIOTIN SYNTHASE"/>
    <property type="match status" value="1"/>
</dbReference>
<dbReference type="PANTHER" id="PTHR22976:SF2">
    <property type="entry name" value="BIOTIN SYNTHASE, MITOCHONDRIAL"/>
    <property type="match status" value="1"/>
</dbReference>
<dbReference type="Pfam" id="PF06968">
    <property type="entry name" value="BATS"/>
    <property type="match status" value="1"/>
</dbReference>
<dbReference type="Pfam" id="PF04055">
    <property type="entry name" value="Radical_SAM"/>
    <property type="match status" value="1"/>
</dbReference>
<dbReference type="PIRSF" id="PIRSF001619">
    <property type="entry name" value="Biotin_synth"/>
    <property type="match status" value="1"/>
</dbReference>
<dbReference type="SFLD" id="SFLDG01278">
    <property type="entry name" value="biotin_synthase_like"/>
    <property type="match status" value="1"/>
</dbReference>
<dbReference type="SFLD" id="SFLDS00029">
    <property type="entry name" value="Radical_SAM"/>
    <property type="match status" value="1"/>
</dbReference>
<dbReference type="SMART" id="SM00876">
    <property type="entry name" value="BATS"/>
    <property type="match status" value="1"/>
</dbReference>
<dbReference type="SMART" id="SM00729">
    <property type="entry name" value="Elp3"/>
    <property type="match status" value="1"/>
</dbReference>
<dbReference type="SUPFAM" id="SSF102114">
    <property type="entry name" value="Radical SAM enzymes"/>
    <property type="match status" value="1"/>
</dbReference>
<dbReference type="PROSITE" id="PS51918">
    <property type="entry name" value="RADICAL_SAM"/>
    <property type="match status" value="1"/>
</dbReference>
<comment type="function">
    <text evidence="1">Catalyzes the conversion of dethiobiotin (DTB) to biotin by the insertion of a sulfur atom into dethiobiotin via a radical-based mechanism.</text>
</comment>
<comment type="catalytic activity">
    <reaction evidence="1">
        <text>(4R,5S)-dethiobiotin + (sulfur carrier)-SH + 2 reduced [2Fe-2S]-[ferredoxin] + 2 S-adenosyl-L-methionine = (sulfur carrier)-H + biotin + 2 5'-deoxyadenosine + 2 L-methionine + 2 oxidized [2Fe-2S]-[ferredoxin]</text>
        <dbReference type="Rhea" id="RHEA:22060"/>
        <dbReference type="Rhea" id="RHEA-COMP:10000"/>
        <dbReference type="Rhea" id="RHEA-COMP:10001"/>
        <dbReference type="Rhea" id="RHEA-COMP:14737"/>
        <dbReference type="Rhea" id="RHEA-COMP:14739"/>
        <dbReference type="ChEBI" id="CHEBI:17319"/>
        <dbReference type="ChEBI" id="CHEBI:29917"/>
        <dbReference type="ChEBI" id="CHEBI:33737"/>
        <dbReference type="ChEBI" id="CHEBI:33738"/>
        <dbReference type="ChEBI" id="CHEBI:57586"/>
        <dbReference type="ChEBI" id="CHEBI:57844"/>
        <dbReference type="ChEBI" id="CHEBI:59789"/>
        <dbReference type="ChEBI" id="CHEBI:64428"/>
        <dbReference type="ChEBI" id="CHEBI:149473"/>
        <dbReference type="EC" id="2.8.1.6"/>
    </reaction>
</comment>
<comment type="cofactor">
    <cofactor evidence="1">
        <name>[4Fe-4S] cluster</name>
        <dbReference type="ChEBI" id="CHEBI:49883"/>
    </cofactor>
    <text evidence="1">Binds 1 [4Fe-4S] cluster. The cluster is coordinated with 3 cysteines and an exchangeable S-adenosyl-L-methionine.</text>
</comment>
<comment type="cofactor">
    <cofactor evidence="1">
        <name>[2Fe-2S] cluster</name>
        <dbReference type="ChEBI" id="CHEBI:190135"/>
    </cofactor>
    <text evidence="1">Binds 1 [2Fe-2S] cluster. The cluster is coordinated with 3 cysteines and 1 arginine.</text>
</comment>
<comment type="pathway">
    <text evidence="1">Cofactor biosynthesis; biotin biosynthesis; biotin from 7,8-diaminononanoate: step 2/2.</text>
</comment>
<comment type="subunit">
    <text evidence="1">Homodimer.</text>
</comment>
<comment type="similarity">
    <text evidence="1">Belongs to the radical SAM superfamily. Biotin synthase family.</text>
</comment>